<name>PADI4_RAT</name>
<feature type="chain" id="PRO_0000220035" description="Protein-arginine deiminase type-4">
    <location>
        <begin position="1"/>
        <end position="666"/>
    </location>
</feature>
<feature type="active site" evidence="1">
    <location>
        <position position="350"/>
    </location>
</feature>
<feature type="active site" evidence="1">
    <location>
        <position position="471"/>
    </location>
</feature>
<feature type="active site" evidence="1">
    <location>
        <position position="473"/>
    </location>
</feature>
<feature type="active site" evidence="1">
    <location>
        <position position="648"/>
    </location>
</feature>
<feature type="binding site" evidence="1">
    <location>
        <position position="153"/>
    </location>
    <ligand>
        <name>Ca(2+)</name>
        <dbReference type="ChEBI" id="CHEBI:29108"/>
        <label>1</label>
    </ligand>
</feature>
<feature type="binding site" evidence="1">
    <location>
        <position position="155"/>
    </location>
    <ligand>
        <name>Ca(2+)</name>
        <dbReference type="ChEBI" id="CHEBI:29108"/>
        <label>1</label>
    </ligand>
</feature>
<feature type="binding site" evidence="1">
    <location>
        <position position="155"/>
    </location>
    <ligand>
        <name>Ca(2+)</name>
        <dbReference type="ChEBI" id="CHEBI:29108"/>
        <label>2</label>
    </ligand>
</feature>
<feature type="binding site" evidence="1">
    <location>
        <position position="165"/>
    </location>
    <ligand>
        <name>Ca(2+)</name>
        <dbReference type="ChEBI" id="CHEBI:29108"/>
        <label>1</label>
    </ligand>
</feature>
<feature type="binding site" evidence="1">
    <location>
        <position position="165"/>
    </location>
    <ligand>
        <name>Ca(2+)</name>
        <dbReference type="ChEBI" id="CHEBI:29108"/>
        <label>3</label>
    </ligand>
</feature>
<feature type="binding site" evidence="1">
    <location>
        <position position="168"/>
    </location>
    <ligand>
        <name>Ca(2+)</name>
        <dbReference type="ChEBI" id="CHEBI:29108"/>
        <label>3</label>
    </ligand>
</feature>
<feature type="binding site" evidence="1">
    <location>
        <position position="176"/>
    </location>
    <ligand>
        <name>Ca(2+)</name>
        <dbReference type="ChEBI" id="CHEBI:29108"/>
        <label>1</label>
    </ligand>
</feature>
<feature type="binding site" evidence="1">
    <location>
        <position position="179"/>
    </location>
    <ligand>
        <name>Ca(2+)</name>
        <dbReference type="ChEBI" id="CHEBI:29108"/>
        <label>1</label>
    </ligand>
</feature>
<feature type="binding site" evidence="1">
    <location>
        <position position="179"/>
    </location>
    <ligand>
        <name>Ca(2+)</name>
        <dbReference type="ChEBI" id="CHEBI:29108"/>
        <label>2</label>
    </ligand>
</feature>
<feature type="binding site" evidence="1">
    <location>
        <position position="349"/>
    </location>
    <ligand>
        <name>Ca(2+)</name>
        <dbReference type="ChEBI" id="CHEBI:29108"/>
        <label>4</label>
    </ligand>
</feature>
<feature type="binding site" evidence="1">
    <location>
        <position position="351"/>
    </location>
    <ligand>
        <name>Ca(2+)</name>
        <dbReference type="ChEBI" id="CHEBI:29108"/>
        <label>5</label>
    </ligand>
</feature>
<feature type="binding site" evidence="1">
    <location>
        <position position="353"/>
    </location>
    <ligand>
        <name>Ca(2+)</name>
        <dbReference type="ChEBI" id="CHEBI:29108"/>
        <label>4</label>
    </ligand>
</feature>
<feature type="binding site" evidence="1">
    <location>
        <position position="369"/>
    </location>
    <ligand>
        <name>Ca(2+)</name>
        <dbReference type="ChEBI" id="CHEBI:29108"/>
        <label>5</label>
    </ligand>
</feature>
<feature type="binding site" evidence="1">
    <location>
        <position position="370"/>
    </location>
    <ligand>
        <name>Ca(2+)</name>
        <dbReference type="ChEBI" id="CHEBI:29108"/>
        <label>5</label>
    </ligand>
</feature>
<feature type="binding site" evidence="1">
    <location>
        <position position="374"/>
    </location>
    <ligand>
        <name>substrate</name>
    </ligand>
</feature>
<feature type="binding site" evidence="1">
    <location>
        <position position="407"/>
    </location>
    <ligand>
        <name>Ca(2+)</name>
        <dbReference type="ChEBI" id="CHEBI:29108"/>
        <label>4</label>
    </ligand>
</feature>
<feature type="binding site" evidence="1">
    <location>
        <position position="410"/>
    </location>
    <ligand>
        <name>Ca(2+)</name>
        <dbReference type="ChEBI" id="CHEBI:29108"/>
        <label>4</label>
    </ligand>
</feature>
<feature type="binding site" evidence="1">
    <location>
        <position position="411"/>
    </location>
    <ligand>
        <name>Ca(2+)</name>
        <dbReference type="ChEBI" id="CHEBI:29108"/>
        <label>4</label>
    </ligand>
</feature>
<feature type="modified residue" description="Citrulline" evidence="1">
    <location>
        <position position="212"/>
    </location>
</feature>
<feature type="modified residue" description="Citrulline" evidence="1">
    <location>
        <position position="218"/>
    </location>
</feature>
<feature type="modified residue" description="Citrulline" evidence="1">
    <location>
        <position position="372"/>
    </location>
</feature>
<feature type="modified residue" description="Citrulline" evidence="1">
    <location>
        <position position="374"/>
    </location>
</feature>
<feature type="modified residue" description="Citrulline" evidence="1">
    <location>
        <position position="383"/>
    </location>
</feature>
<feature type="sequence conflict" description="In Ref. 2; BAA23523." evidence="4" ref="2">
    <original>K</original>
    <variation>E</variation>
    <location>
        <position position="655"/>
    </location>
</feature>
<keyword id="KW-0106">Calcium</keyword>
<keyword id="KW-0156">Chromatin regulator</keyword>
<keyword id="KW-0164">Citrullination</keyword>
<keyword id="KW-0963">Cytoplasm</keyword>
<keyword id="KW-0378">Hydrolase</keyword>
<keyword id="KW-0391">Immunity</keyword>
<keyword id="KW-0399">Innate immunity</keyword>
<keyword id="KW-0479">Metal-binding</keyword>
<keyword id="KW-0539">Nucleus</keyword>
<keyword id="KW-1185">Reference proteome</keyword>
<keyword id="KW-0804">Transcription</keyword>
<keyword id="KW-0805">Transcription regulation</keyword>
<sequence length="666" mass="74467">MAQGAVIHVAPEEPTHAVCVVGTATPLDIRGSAPRGSTSFSITASPEVVVDVIHGPPSKKSTTGASKWPLDPKLEVTLQMKAASSRIDDQKVRISYYGPKTSSTQALLYLTGVELSLSADVTRTGKAKPAPAGKDQSTWTWGPDGHGAILLVNCDKEDPKSSGMDFEDDKVLDNKDLQDMSPMTLSTKTPKDFFDKYQLVLQVPKAKMNKVRVFRATRGKLPSRYKVVLGPQQFSHRLELLGGQHSTDFYVEGLAFPDADFKGLIPLTISLLDKSNPELPEALVFQDTVMFRVAPWIMTPNTQPPQEVYVCRFSDNEDFLKSLATFTKKAKCKLTVCPEEENQDDQWMQDEMEIGYIQAPHKTLPVVFDSPRDRGLKDFPVKRVMGPNFGYVTRGLYRAEVTGLDAFGNLEVSPPVTVRGKEYPLGRILIGSSGYSSSESRDMHQILQDFLGAQQVQAPVRLFSDWLFVGHVDEFLSFVPARGKQGFRLLLSSPRACYQMFQELQTEGHGEASLFEGLKRKRQTISDILSSQKLRDQNAYVESCIDWNREVLKRELGLTEGDIIDIPQLFRIVGNSRGNPKAEAFFPNMVNMLVLGKHLGIPKPFGPIINGRCCLEEKVCSLLEPLGLHCTFINDFYSYHMYHGEVHCGTNVRRKPFAFKWWHMVP</sequence>
<dbReference type="EC" id="3.5.3.15" evidence="1"/>
<dbReference type="EMBL" id="AB010999">
    <property type="protein sequence ID" value="BAA32100.1"/>
    <property type="molecule type" value="mRNA"/>
</dbReference>
<dbReference type="EMBL" id="AB008803">
    <property type="protein sequence ID" value="BAA23523.1"/>
    <property type="molecule type" value="mRNA"/>
</dbReference>
<dbReference type="RefSeq" id="NP_058923.1">
    <property type="nucleotide sequence ID" value="NM_017227.1"/>
</dbReference>
<dbReference type="SMR" id="O88807"/>
<dbReference type="FunCoup" id="O88807">
    <property type="interactions" value="11"/>
</dbReference>
<dbReference type="STRING" id="10116.ENSRNOP00000009081"/>
<dbReference type="GlyGen" id="O88807">
    <property type="glycosylation" value="1 site"/>
</dbReference>
<dbReference type="PhosphoSitePlus" id="O88807"/>
<dbReference type="PaxDb" id="10116-ENSRNOP00000009081"/>
<dbReference type="Ensembl" id="ENSRNOT00000009081.3">
    <property type="protein sequence ID" value="ENSRNOP00000009081.1"/>
    <property type="gene ID" value="ENSRNOG00000006855.3"/>
</dbReference>
<dbReference type="GeneID" id="29512"/>
<dbReference type="KEGG" id="rno:29512"/>
<dbReference type="UCSC" id="RGD:3290">
    <property type="organism name" value="rat"/>
</dbReference>
<dbReference type="AGR" id="RGD:3290"/>
<dbReference type="CTD" id="23569"/>
<dbReference type="RGD" id="3290">
    <property type="gene designation" value="Padi4"/>
</dbReference>
<dbReference type="eggNOG" id="ENOG502QVJA">
    <property type="taxonomic scope" value="Eukaryota"/>
</dbReference>
<dbReference type="GeneTree" id="ENSGT00940000153217"/>
<dbReference type="HOGENOM" id="CLU_021911_0_0_1"/>
<dbReference type="InParanoid" id="O88807"/>
<dbReference type="OMA" id="PQEVYAC"/>
<dbReference type="PhylomeDB" id="O88807"/>
<dbReference type="TreeFam" id="TF331952"/>
<dbReference type="BRENDA" id="3.5.3.15">
    <property type="organism ID" value="5301"/>
</dbReference>
<dbReference type="Reactome" id="R-RNO-3247509">
    <property type="pathway name" value="Chromatin modifying enzymes"/>
</dbReference>
<dbReference type="PRO" id="PR:O88807"/>
<dbReference type="Proteomes" id="UP000002494">
    <property type="component" value="Chromosome 5"/>
</dbReference>
<dbReference type="Bgee" id="ENSRNOG00000006855">
    <property type="expression patterns" value="Expressed in pancreas and 13 other cell types or tissues"/>
</dbReference>
<dbReference type="GO" id="GO:0005737">
    <property type="term" value="C:cytoplasm"/>
    <property type="evidence" value="ECO:0000318"/>
    <property type="project" value="GO_Central"/>
</dbReference>
<dbReference type="GO" id="GO:0005634">
    <property type="term" value="C:nucleus"/>
    <property type="evidence" value="ECO:0000250"/>
    <property type="project" value="UniProtKB"/>
</dbReference>
<dbReference type="GO" id="GO:0032991">
    <property type="term" value="C:protein-containing complex"/>
    <property type="evidence" value="ECO:0000266"/>
    <property type="project" value="RGD"/>
</dbReference>
<dbReference type="GO" id="GO:0005509">
    <property type="term" value="F:calcium ion binding"/>
    <property type="evidence" value="ECO:0000250"/>
    <property type="project" value="UniProtKB"/>
</dbReference>
<dbReference type="GO" id="GO:0140794">
    <property type="term" value="F:histone arginine deiminase activity"/>
    <property type="evidence" value="ECO:0000266"/>
    <property type="project" value="RGD"/>
</dbReference>
<dbReference type="GO" id="GO:0140797">
    <property type="term" value="F:histone H3R17 arginine deiminase activity"/>
    <property type="evidence" value="ECO:0000266"/>
    <property type="project" value="RGD"/>
</dbReference>
<dbReference type="GO" id="GO:0140795">
    <property type="term" value="F:histone H3R2 arginine deiminase activity"/>
    <property type="evidence" value="ECO:0000266"/>
    <property type="project" value="RGD"/>
</dbReference>
<dbReference type="GO" id="GO:0140798">
    <property type="term" value="F:histone H3R26 arginine deiminase activity"/>
    <property type="evidence" value="ECO:0000266"/>
    <property type="project" value="RGD"/>
</dbReference>
<dbReference type="GO" id="GO:0140796">
    <property type="term" value="F:histone H3R8 arginine deiminase activity"/>
    <property type="evidence" value="ECO:0000266"/>
    <property type="project" value="RGD"/>
</dbReference>
<dbReference type="GO" id="GO:0042802">
    <property type="term" value="F:identical protein binding"/>
    <property type="evidence" value="ECO:0000266"/>
    <property type="project" value="RGD"/>
</dbReference>
<dbReference type="GO" id="GO:0004668">
    <property type="term" value="F:protein-arginine deiminase activity"/>
    <property type="evidence" value="ECO:0000314"/>
    <property type="project" value="UniProtKB"/>
</dbReference>
<dbReference type="GO" id="GO:0006325">
    <property type="term" value="P:chromatin organization"/>
    <property type="evidence" value="ECO:0000250"/>
    <property type="project" value="UniProtKB"/>
</dbReference>
<dbReference type="GO" id="GO:0006338">
    <property type="term" value="P:chromatin remodeling"/>
    <property type="evidence" value="ECO:0000250"/>
    <property type="project" value="UniProtKB"/>
</dbReference>
<dbReference type="GO" id="GO:0045087">
    <property type="term" value="P:innate immune response"/>
    <property type="evidence" value="ECO:0007669"/>
    <property type="project" value="UniProtKB-KW"/>
</dbReference>
<dbReference type="GO" id="GO:0006334">
    <property type="term" value="P:nucleosome assembly"/>
    <property type="evidence" value="ECO:0000250"/>
    <property type="project" value="UniProtKB"/>
</dbReference>
<dbReference type="GO" id="GO:0043687">
    <property type="term" value="P:post-translational protein modification"/>
    <property type="evidence" value="ECO:0000266"/>
    <property type="project" value="RGD"/>
</dbReference>
<dbReference type="GO" id="GO:0019827">
    <property type="term" value="P:stem cell population maintenance"/>
    <property type="evidence" value="ECO:0000250"/>
    <property type="project" value="UniProtKB"/>
</dbReference>
<dbReference type="CDD" id="cd04214">
    <property type="entry name" value="PAD_N"/>
    <property type="match status" value="1"/>
</dbReference>
<dbReference type="FunFam" id="2.60.40.1700:FF:000001">
    <property type="entry name" value="Protein-arginine deiminase type-2"/>
    <property type="match status" value="1"/>
</dbReference>
<dbReference type="FunFam" id="3.75.10.10:FF:000003">
    <property type="entry name" value="Protein-arginine deiminase type-2"/>
    <property type="match status" value="1"/>
</dbReference>
<dbReference type="FunFam" id="2.60.40.1860:FF:000003">
    <property type="entry name" value="Protein-arginine deiminase type-4"/>
    <property type="match status" value="1"/>
</dbReference>
<dbReference type="Gene3D" id="3.75.10.10">
    <property type="entry name" value="L-arginine/glycine Amidinotransferase, Chain A"/>
    <property type="match status" value="1"/>
</dbReference>
<dbReference type="Gene3D" id="2.60.40.1700">
    <property type="entry name" value="Protein-arginine deiminase, central domain"/>
    <property type="match status" value="1"/>
</dbReference>
<dbReference type="Gene3D" id="2.60.40.1860">
    <property type="entry name" value="Protein-arginine deiminase, N-terminal domain"/>
    <property type="match status" value="1"/>
</dbReference>
<dbReference type="InterPro" id="IPR008972">
    <property type="entry name" value="Cupredoxin"/>
</dbReference>
<dbReference type="InterPro" id="IPR004303">
    <property type="entry name" value="PAD"/>
</dbReference>
<dbReference type="InterPro" id="IPR013530">
    <property type="entry name" value="PAD_C"/>
</dbReference>
<dbReference type="InterPro" id="IPR036556">
    <property type="entry name" value="PAD_central_sf"/>
</dbReference>
<dbReference type="InterPro" id="IPR013732">
    <property type="entry name" value="PAD_N"/>
</dbReference>
<dbReference type="InterPro" id="IPR038685">
    <property type="entry name" value="PAD_N_sf"/>
</dbReference>
<dbReference type="InterPro" id="IPR013733">
    <property type="entry name" value="Prot_Arg_deaminase_cen_dom"/>
</dbReference>
<dbReference type="PANTHER" id="PTHR10837">
    <property type="entry name" value="PEPTIDYLARGININE DEIMINASE"/>
    <property type="match status" value="1"/>
</dbReference>
<dbReference type="PANTHER" id="PTHR10837:SF3">
    <property type="entry name" value="PROTEIN-ARGININE DEIMINASE TYPE-4"/>
    <property type="match status" value="1"/>
</dbReference>
<dbReference type="Pfam" id="PF03068">
    <property type="entry name" value="PAD"/>
    <property type="match status" value="1"/>
</dbReference>
<dbReference type="Pfam" id="PF08527">
    <property type="entry name" value="PAD_M"/>
    <property type="match status" value="1"/>
</dbReference>
<dbReference type="Pfam" id="PF08526">
    <property type="entry name" value="PAD_N"/>
    <property type="match status" value="1"/>
</dbReference>
<dbReference type="PIRSF" id="PIRSF001247">
    <property type="entry name" value="Protein-arginine_deiminase"/>
    <property type="match status" value="1"/>
</dbReference>
<dbReference type="SUPFAM" id="SSF49503">
    <property type="entry name" value="Cupredoxins"/>
    <property type="match status" value="1"/>
</dbReference>
<dbReference type="SUPFAM" id="SSF55909">
    <property type="entry name" value="Pentein"/>
    <property type="match status" value="1"/>
</dbReference>
<dbReference type="SUPFAM" id="SSF110083">
    <property type="entry name" value="Peptidylarginine deiminase Pad4, middle domain"/>
    <property type="match status" value="1"/>
</dbReference>
<evidence type="ECO:0000250" key="1">
    <source>
        <dbReference type="UniProtKB" id="Q9UM07"/>
    </source>
</evidence>
<evidence type="ECO:0000250" key="2">
    <source>
        <dbReference type="UniProtKB" id="Q9Z183"/>
    </source>
</evidence>
<evidence type="ECO:0000269" key="3">
    <source>
    </source>
</evidence>
<evidence type="ECO:0000305" key="4"/>
<proteinExistence type="evidence at transcript level"/>
<organism>
    <name type="scientific">Rattus norvegicus</name>
    <name type="common">Rat</name>
    <dbReference type="NCBI Taxonomy" id="10116"/>
    <lineage>
        <taxon>Eukaryota</taxon>
        <taxon>Metazoa</taxon>
        <taxon>Chordata</taxon>
        <taxon>Craniata</taxon>
        <taxon>Vertebrata</taxon>
        <taxon>Euteleostomi</taxon>
        <taxon>Mammalia</taxon>
        <taxon>Eutheria</taxon>
        <taxon>Euarchontoglires</taxon>
        <taxon>Glires</taxon>
        <taxon>Rodentia</taxon>
        <taxon>Myomorpha</taxon>
        <taxon>Muroidea</taxon>
        <taxon>Muridae</taxon>
        <taxon>Murinae</taxon>
        <taxon>Rattus</taxon>
    </lineage>
</organism>
<reference key="1">
    <citation type="journal article" date="1998" name="FEBS Lett.">
        <title>Molecular cloning of two novel types of peptidylarginine deiminase cDNAs from retinoic acid-treated culture of a newborn rat keratinocyte cell line.</title>
        <authorList>
            <person name="Ishigami A."/>
            <person name="Kuramoto M."/>
            <person name="Yamada M."/>
            <person name="Watanabe K."/>
            <person name="Senshu T."/>
        </authorList>
    </citation>
    <scope>NUCLEOTIDE SEQUENCE [MRNA]</scope>
</reference>
<reference key="2">
    <citation type="journal article" date="1998" name="Biochim. Biophys. Acta">
        <title>Cloning of cDNA encoding a novel isoform (type IV) of peptidylarginine deiminase from rat epidermis.</title>
        <authorList>
            <person name="Yamakoshi A."/>
            <person name="Ono H."/>
            <person name="Nishijyo T."/>
            <person name="Shiraiwa M."/>
            <person name="Takahara H."/>
        </authorList>
    </citation>
    <scope>NUCLEOTIDE SEQUENCE [MRNA]</scope>
    <scope>TISSUE SPECIFICITY</scope>
    <source>
        <tissue>Epidermis</tissue>
    </source>
</reference>
<accession>O88807</accession>
<accession>O35117</accession>
<comment type="function">
    <text evidence="1 2">Catalyzes the citrullination/deimination of arginine residues of proteins such as histones, thereby playing a key role in histone code and regulation of stem cell maintenance. Citrullinates histone H1 at 'Arg-54' (to form H1R54ci), histone H3 at 'Arg-2', 'Arg-8', 'Arg-17' and/or 'Arg-26' (to form H3R2ci, H3R8ci, H3R17ci, H3R26ci, respectively) and histone H4 at 'Arg-3' (to form H4R3ci). Acts as a key regulator of stem cell maintenance by mediating citrullination of histone H1: citrullination of 'Arg-54' of histone H1 (H1R54ci) results in H1 displacement from chromatin and global chromatin decondensation, thereby promoting pluripotency and stem cell maintenance. Promotes profound chromatin decondensation during the innate immune response to infection in neutrophils by mediating formation of H1R54ci (By similarity). Required for the formation of neutrophil extracellular traps (NETs); NETs are mainly composed of DNA fibers and are released by neutrophils to bind pathogens during inflammation (By similarity). Citrullination of histone H3 prevents their methylation by CARM1 and HRMT1L2/PRMT1 and represses transcription. Citrullinates EP300/P300 at 'Arg-2142', which favors its interaction with NCOA2/GRIP1 (By similarity).</text>
</comment>
<comment type="catalytic activity">
    <reaction evidence="1">
        <text>L-arginyl-[protein] + H2O = L-citrullyl-[protein] + NH4(+)</text>
        <dbReference type="Rhea" id="RHEA:18089"/>
        <dbReference type="Rhea" id="RHEA-COMP:10532"/>
        <dbReference type="Rhea" id="RHEA-COMP:10588"/>
        <dbReference type="ChEBI" id="CHEBI:15377"/>
        <dbReference type="ChEBI" id="CHEBI:28938"/>
        <dbReference type="ChEBI" id="CHEBI:29965"/>
        <dbReference type="ChEBI" id="CHEBI:83397"/>
        <dbReference type="EC" id="3.5.3.15"/>
    </reaction>
</comment>
<comment type="cofactor">
    <cofactor evidence="1">
        <name>Ca(2+)</name>
        <dbReference type="ChEBI" id="CHEBI:29108"/>
    </cofactor>
    <text evidence="1">Binds 5 Ca(2+) ions per subunit.</text>
</comment>
<comment type="subcellular location">
    <subcellularLocation>
        <location evidence="1">Cytoplasm</location>
    </subcellularLocation>
    <subcellularLocation>
        <location evidence="1">Nucleus</location>
    </subcellularLocation>
    <subcellularLocation>
        <location evidence="1">Cytoplasmic granule</location>
    </subcellularLocation>
    <text evidence="1">Cytoplasmic granules of eosinophils and neutrophils.</text>
</comment>
<comment type="tissue specificity">
    <text evidence="3">Epidermis.</text>
</comment>
<comment type="PTM">
    <text evidence="1">Autocitrullination at Arg-372 and Arg-374 inactivates the enzyme.</text>
</comment>
<comment type="similarity">
    <text evidence="4">Belongs to the protein arginine deiminase family.</text>
</comment>
<protein>
    <recommendedName>
        <fullName>Protein-arginine deiminase type-4</fullName>
        <ecNumber evidence="1">3.5.3.15</ecNumber>
    </recommendedName>
    <alternativeName>
        <fullName>PAD-R4</fullName>
    </alternativeName>
    <alternativeName>
        <fullName>Peptidylarginine deiminase IV</fullName>
    </alternativeName>
    <alternativeName>
        <fullName>Peptidylarginine deiminase type alpha</fullName>
    </alternativeName>
    <alternativeName>
        <fullName>Protein-arginine deiminase type IV</fullName>
    </alternativeName>
</protein>
<gene>
    <name type="primary">Padi4</name>
    <name type="synonym">Pad4</name>
    <name type="synonym">Pdi4</name>
</gene>